<sequence>MQLDRIAQDLVAALRFYSRLPLPAGRDDPDAFAVPSLNRIAYAIPLAGAVIGLIGAVVLVGALALKLPAFLASVLAVTALVLTTGAFHEDGLADTADGLGGGRDKAQRLAIMRDSRIGTYGGCALILALLLRVAALEALVASAGMFRAALALVVAEAASRAAGVLLLLALPPARADGAGASFGRPSESAGLACALVAALLVVVILVPGFGISTAFAGLIAPLVALFAMMRLSGRLIGGQTGDVAGATQQVAVIVFLLGVLIFPGR</sequence>
<keyword id="KW-0997">Cell inner membrane</keyword>
<keyword id="KW-1003">Cell membrane</keyword>
<keyword id="KW-0169">Cobalamin biosynthesis</keyword>
<keyword id="KW-0460">Magnesium</keyword>
<keyword id="KW-0472">Membrane</keyword>
<keyword id="KW-1185">Reference proteome</keyword>
<keyword id="KW-0808">Transferase</keyword>
<keyword id="KW-0812">Transmembrane</keyword>
<keyword id="KW-1133">Transmembrane helix</keyword>
<comment type="function">
    <text evidence="1">Joins adenosylcobinamide-GDP and alpha-ribazole to generate adenosylcobalamin (Ado-cobalamin). Also synthesizes adenosylcobalamin 5'-phosphate from adenosylcobinamide-GDP and alpha-ribazole 5'-phosphate.</text>
</comment>
<comment type="catalytic activity">
    <reaction evidence="1">
        <text>alpha-ribazole + adenosylcob(III)inamide-GDP = adenosylcob(III)alamin + GMP + H(+)</text>
        <dbReference type="Rhea" id="RHEA:16049"/>
        <dbReference type="ChEBI" id="CHEBI:10329"/>
        <dbReference type="ChEBI" id="CHEBI:15378"/>
        <dbReference type="ChEBI" id="CHEBI:18408"/>
        <dbReference type="ChEBI" id="CHEBI:58115"/>
        <dbReference type="ChEBI" id="CHEBI:60487"/>
        <dbReference type="EC" id="2.7.8.26"/>
    </reaction>
</comment>
<comment type="catalytic activity">
    <reaction evidence="1">
        <text>alpha-ribazole 5'-phosphate + adenosylcob(III)inamide-GDP = adenosylcob(III)alamin 5'-phosphate + GMP + H(+)</text>
        <dbReference type="Rhea" id="RHEA:23560"/>
        <dbReference type="ChEBI" id="CHEBI:15378"/>
        <dbReference type="ChEBI" id="CHEBI:57918"/>
        <dbReference type="ChEBI" id="CHEBI:58115"/>
        <dbReference type="ChEBI" id="CHEBI:60487"/>
        <dbReference type="ChEBI" id="CHEBI:60493"/>
        <dbReference type="EC" id="2.7.8.26"/>
    </reaction>
</comment>
<comment type="cofactor">
    <cofactor evidence="1">
        <name>Mg(2+)</name>
        <dbReference type="ChEBI" id="CHEBI:18420"/>
    </cofactor>
</comment>
<comment type="pathway">
    <text evidence="1">Cofactor biosynthesis; adenosylcobalamin biosynthesis; adenosylcobalamin from cob(II)yrinate a,c-diamide: step 7/7.</text>
</comment>
<comment type="subcellular location">
    <subcellularLocation>
        <location evidence="1">Cell inner membrane</location>
        <topology evidence="1">Multi-pass membrane protein</topology>
    </subcellularLocation>
</comment>
<comment type="similarity">
    <text evidence="1">Belongs to the CobS family.</text>
</comment>
<evidence type="ECO:0000255" key="1">
    <source>
        <dbReference type="HAMAP-Rule" id="MF_00719"/>
    </source>
</evidence>
<accession>A7IB66</accession>
<proteinExistence type="inferred from homology"/>
<dbReference type="EC" id="2.7.8.26" evidence="1"/>
<dbReference type="EMBL" id="CP000781">
    <property type="protein sequence ID" value="ABS69481.1"/>
    <property type="molecule type" value="Genomic_DNA"/>
</dbReference>
<dbReference type="STRING" id="78245.Xaut_4260"/>
<dbReference type="KEGG" id="xau:Xaut_4260"/>
<dbReference type="eggNOG" id="COG0368">
    <property type="taxonomic scope" value="Bacteria"/>
</dbReference>
<dbReference type="HOGENOM" id="CLU_057426_1_0_5"/>
<dbReference type="OrthoDB" id="9794626at2"/>
<dbReference type="UniPathway" id="UPA00148">
    <property type="reaction ID" value="UER00238"/>
</dbReference>
<dbReference type="Proteomes" id="UP000002417">
    <property type="component" value="Chromosome"/>
</dbReference>
<dbReference type="GO" id="GO:0005886">
    <property type="term" value="C:plasma membrane"/>
    <property type="evidence" value="ECO:0007669"/>
    <property type="project" value="UniProtKB-SubCell"/>
</dbReference>
<dbReference type="GO" id="GO:0051073">
    <property type="term" value="F:adenosylcobinamide-GDP ribazoletransferase activity"/>
    <property type="evidence" value="ECO:0007669"/>
    <property type="project" value="UniProtKB-UniRule"/>
</dbReference>
<dbReference type="GO" id="GO:0008818">
    <property type="term" value="F:cobalamin 5'-phosphate synthase activity"/>
    <property type="evidence" value="ECO:0007669"/>
    <property type="project" value="UniProtKB-UniRule"/>
</dbReference>
<dbReference type="GO" id="GO:0009236">
    <property type="term" value="P:cobalamin biosynthetic process"/>
    <property type="evidence" value="ECO:0007669"/>
    <property type="project" value="UniProtKB-UniRule"/>
</dbReference>
<dbReference type="HAMAP" id="MF_00719">
    <property type="entry name" value="CobS"/>
    <property type="match status" value="1"/>
</dbReference>
<dbReference type="InterPro" id="IPR003805">
    <property type="entry name" value="CobS"/>
</dbReference>
<dbReference type="NCBIfam" id="TIGR00317">
    <property type="entry name" value="cobS"/>
    <property type="match status" value="1"/>
</dbReference>
<dbReference type="PANTHER" id="PTHR34148">
    <property type="entry name" value="ADENOSYLCOBINAMIDE-GDP RIBAZOLETRANSFERASE"/>
    <property type="match status" value="1"/>
</dbReference>
<dbReference type="PANTHER" id="PTHR34148:SF1">
    <property type="entry name" value="ADENOSYLCOBINAMIDE-GDP RIBAZOLETRANSFERASE"/>
    <property type="match status" value="1"/>
</dbReference>
<dbReference type="Pfam" id="PF02654">
    <property type="entry name" value="CobS"/>
    <property type="match status" value="1"/>
</dbReference>
<name>COBS_XANP2</name>
<protein>
    <recommendedName>
        <fullName evidence="1">Adenosylcobinamide-GDP ribazoletransferase</fullName>
        <ecNumber evidence="1">2.7.8.26</ecNumber>
    </recommendedName>
    <alternativeName>
        <fullName evidence="1">Cobalamin synthase</fullName>
    </alternativeName>
    <alternativeName>
        <fullName evidence="1">Cobalamin-5'-phosphate synthase</fullName>
    </alternativeName>
</protein>
<organism>
    <name type="scientific">Xanthobacter autotrophicus (strain ATCC BAA-1158 / Py2)</name>
    <dbReference type="NCBI Taxonomy" id="78245"/>
    <lineage>
        <taxon>Bacteria</taxon>
        <taxon>Pseudomonadati</taxon>
        <taxon>Pseudomonadota</taxon>
        <taxon>Alphaproteobacteria</taxon>
        <taxon>Hyphomicrobiales</taxon>
        <taxon>Xanthobacteraceae</taxon>
        <taxon>Xanthobacter</taxon>
    </lineage>
</organism>
<reference key="1">
    <citation type="submission" date="2007-07" db="EMBL/GenBank/DDBJ databases">
        <title>Complete sequence of chromosome of Xanthobacter autotrophicus Py2.</title>
        <authorList>
            <consortium name="US DOE Joint Genome Institute"/>
            <person name="Copeland A."/>
            <person name="Lucas S."/>
            <person name="Lapidus A."/>
            <person name="Barry K."/>
            <person name="Glavina del Rio T."/>
            <person name="Hammon N."/>
            <person name="Israni S."/>
            <person name="Dalin E."/>
            <person name="Tice H."/>
            <person name="Pitluck S."/>
            <person name="Sims D."/>
            <person name="Brettin T."/>
            <person name="Bruce D."/>
            <person name="Detter J.C."/>
            <person name="Han C."/>
            <person name="Tapia R."/>
            <person name="Brainard J."/>
            <person name="Schmutz J."/>
            <person name="Larimer F."/>
            <person name="Land M."/>
            <person name="Hauser L."/>
            <person name="Kyrpides N."/>
            <person name="Kim E."/>
            <person name="Ensigns S.A."/>
            <person name="Richardson P."/>
        </authorList>
    </citation>
    <scope>NUCLEOTIDE SEQUENCE [LARGE SCALE GENOMIC DNA]</scope>
    <source>
        <strain>ATCC BAA-1158 / Py2</strain>
    </source>
</reference>
<feature type="chain" id="PRO_1000132615" description="Adenosylcobinamide-GDP ribazoletransferase">
    <location>
        <begin position="1"/>
        <end position="265"/>
    </location>
</feature>
<feature type="transmembrane region" description="Helical" evidence="1">
    <location>
        <begin position="40"/>
        <end position="60"/>
    </location>
</feature>
<feature type="transmembrane region" description="Helical" evidence="1">
    <location>
        <begin position="67"/>
        <end position="87"/>
    </location>
</feature>
<feature type="transmembrane region" description="Helical" evidence="1">
    <location>
        <begin position="121"/>
        <end position="141"/>
    </location>
</feature>
<feature type="transmembrane region" description="Helical" evidence="1">
    <location>
        <begin position="150"/>
        <end position="170"/>
    </location>
</feature>
<feature type="transmembrane region" description="Helical" evidence="1">
    <location>
        <begin position="191"/>
        <end position="211"/>
    </location>
</feature>
<feature type="transmembrane region" description="Helical" evidence="1">
    <location>
        <begin position="213"/>
        <end position="233"/>
    </location>
</feature>
<feature type="transmembrane region" description="Helical" evidence="1">
    <location>
        <begin position="243"/>
        <end position="263"/>
    </location>
</feature>
<gene>
    <name evidence="1" type="primary">cobS</name>
    <name type="ordered locus">Xaut_4260</name>
</gene>